<feature type="chain" id="PRO_1000141769" description="DNA-directed RNA polymerase subunit beta'">
    <location>
        <begin position="1"/>
        <end position="1296"/>
    </location>
</feature>
<feature type="region of interest" description="Disordered" evidence="2">
    <location>
        <begin position="188"/>
        <end position="209"/>
    </location>
</feature>
<feature type="binding site" evidence="1">
    <location>
        <position position="60"/>
    </location>
    <ligand>
        <name>Zn(2+)</name>
        <dbReference type="ChEBI" id="CHEBI:29105"/>
        <label>1</label>
    </ligand>
</feature>
<feature type="binding site" evidence="1">
    <location>
        <position position="62"/>
    </location>
    <ligand>
        <name>Zn(2+)</name>
        <dbReference type="ChEBI" id="CHEBI:29105"/>
        <label>1</label>
    </ligand>
</feature>
<feature type="binding site" evidence="1">
    <location>
        <position position="75"/>
    </location>
    <ligand>
        <name>Zn(2+)</name>
        <dbReference type="ChEBI" id="CHEBI:29105"/>
        <label>1</label>
    </ligand>
</feature>
<feature type="binding site" evidence="1">
    <location>
        <position position="78"/>
    </location>
    <ligand>
        <name>Zn(2+)</name>
        <dbReference type="ChEBI" id="CHEBI:29105"/>
        <label>1</label>
    </ligand>
</feature>
<feature type="binding site" evidence="1">
    <location>
        <position position="535"/>
    </location>
    <ligand>
        <name>Mg(2+)</name>
        <dbReference type="ChEBI" id="CHEBI:18420"/>
    </ligand>
</feature>
<feature type="binding site" evidence="1">
    <location>
        <position position="537"/>
    </location>
    <ligand>
        <name>Mg(2+)</name>
        <dbReference type="ChEBI" id="CHEBI:18420"/>
    </ligand>
</feature>
<feature type="binding site" evidence="1">
    <location>
        <position position="539"/>
    </location>
    <ligand>
        <name>Mg(2+)</name>
        <dbReference type="ChEBI" id="CHEBI:18420"/>
    </ligand>
</feature>
<feature type="binding site" evidence="1">
    <location>
        <position position="877"/>
    </location>
    <ligand>
        <name>Zn(2+)</name>
        <dbReference type="ChEBI" id="CHEBI:29105"/>
        <label>2</label>
    </ligand>
</feature>
<feature type="binding site" evidence="1">
    <location>
        <position position="954"/>
    </location>
    <ligand>
        <name>Zn(2+)</name>
        <dbReference type="ChEBI" id="CHEBI:29105"/>
        <label>2</label>
    </ligand>
</feature>
<feature type="binding site" evidence="1">
    <location>
        <position position="961"/>
    </location>
    <ligand>
        <name>Zn(2+)</name>
        <dbReference type="ChEBI" id="CHEBI:29105"/>
        <label>2</label>
    </ligand>
</feature>
<feature type="binding site" evidence="1">
    <location>
        <position position="964"/>
    </location>
    <ligand>
        <name>Zn(2+)</name>
        <dbReference type="ChEBI" id="CHEBI:29105"/>
        <label>2</label>
    </ligand>
</feature>
<comment type="function">
    <text evidence="1">DNA-dependent RNA polymerase catalyzes the transcription of DNA into RNA using the four ribonucleoside triphosphates as substrates.</text>
</comment>
<comment type="catalytic activity">
    <reaction evidence="1">
        <text>RNA(n) + a ribonucleoside 5'-triphosphate = RNA(n+1) + diphosphate</text>
        <dbReference type="Rhea" id="RHEA:21248"/>
        <dbReference type="Rhea" id="RHEA-COMP:14527"/>
        <dbReference type="Rhea" id="RHEA-COMP:17342"/>
        <dbReference type="ChEBI" id="CHEBI:33019"/>
        <dbReference type="ChEBI" id="CHEBI:61557"/>
        <dbReference type="ChEBI" id="CHEBI:140395"/>
        <dbReference type="EC" id="2.7.7.6"/>
    </reaction>
</comment>
<comment type="cofactor">
    <cofactor evidence="1">
        <name>Mg(2+)</name>
        <dbReference type="ChEBI" id="CHEBI:18420"/>
    </cofactor>
    <text evidence="1">Binds 1 Mg(2+) ion per subunit.</text>
</comment>
<comment type="cofactor">
    <cofactor evidence="1">
        <name>Zn(2+)</name>
        <dbReference type="ChEBI" id="CHEBI:29105"/>
    </cofactor>
    <text evidence="1">Binds 2 Zn(2+) ions per subunit.</text>
</comment>
<comment type="subunit">
    <text evidence="1">The RNAP catalytic core consists of 2 alpha, 1 beta, 1 beta' and 1 omega subunit. When a sigma factor is associated with the core the holoenzyme is formed, which can initiate transcription.</text>
</comment>
<comment type="similarity">
    <text evidence="1">Belongs to the RNA polymerase beta' chain family.</text>
</comment>
<reference key="1">
    <citation type="journal article" date="2007" name="Genome Res.">
        <title>Genome characteristics of facultatively symbiotic Frankia sp. strains reflect host range and host plant biogeography.</title>
        <authorList>
            <person name="Normand P."/>
            <person name="Lapierre P."/>
            <person name="Tisa L.S."/>
            <person name="Gogarten J.P."/>
            <person name="Alloisio N."/>
            <person name="Bagnarol E."/>
            <person name="Bassi C.A."/>
            <person name="Berry A.M."/>
            <person name="Bickhart D.M."/>
            <person name="Choisne N."/>
            <person name="Couloux A."/>
            <person name="Cournoyer B."/>
            <person name="Cruveiller S."/>
            <person name="Daubin V."/>
            <person name="Demange N."/>
            <person name="Francino M.P."/>
            <person name="Goltsman E."/>
            <person name="Huang Y."/>
            <person name="Kopp O.R."/>
            <person name="Labarre L."/>
            <person name="Lapidus A."/>
            <person name="Lavire C."/>
            <person name="Marechal J."/>
            <person name="Martinez M."/>
            <person name="Mastronunzio J.E."/>
            <person name="Mullin B.C."/>
            <person name="Niemann J."/>
            <person name="Pujic P."/>
            <person name="Rawnsley T."/>
            <person name="Rouy Z."/>
            <person name="Schenowitz C."/>
            <person name="Sellstedt A."/>
            <person name="Tavares F."/>
            <person name="Tomkins J.P."/>
            <person name="Vallenet D."/>
            <person name="Valverde C."/>
            <person name="Wall L.G."/>
            <person name="Wang Y."/>
            <person name="Medigue C."/>
            <person name="Benson D.R."/>
        </authorList>
    </citation>
    <scope>NUCLEOTIDE SEQUENCE [LARGE SCALE GENOMIC DNA]</scope>
    <source>
        <strain>EAN1pec</strain>
    </source>
</reference>
<sequence length="1296" mass="144119">MLDVNFFDELRIGLATADDIRQWSFGEVKKPETINYRTLKPEKDGLFCEKIFGPTRDWECYCGKYKRVRFKGIICERCGVEVTRAKVRRERMGHIELAAPVTHIWYFKGVPSRLGYLLDLAPKDLEKVIYFAAYMITKVDIDSRHRDLPTLEARIGVEKQQLEDKKNADVETRQRKLEEDLAQLEAEGAKGDARRKVRESAEREMRQIRDRSQRKIDDLDRVFDRFKNMKVQDLEPDELLFRELRDRFGQYFEGGMGAEALQHRLADFDLAAEAESLRETIRSGKGQKKARALKRLKVVSAFLNTRNSPMGMVLDCVPVIPPDLRPMVQLDGGRFATSDLNDLYRRVINRNNRLKRLLDLGAPEIIVNNEKRMLQEAVDALFDNGRRGRPVTGPGNRPLKSLSDMLKGKQGRFRQNLLGKRVDYSGRSVIVVGPQLKLHQCGLPKQMALELFKPFVMKRLVDLNHAQNIKSAKRMVERARPVVWDVLEEVITEHPVLLNRAPTLHRLGIQAFEPQLVEGKAIQIHPLVCTAFNADFDGDQMAVHLPLSAEAQAEARILMLSSNNILSPASGRPLAMPSLDMVTGVFHLSRVSEGAIGEGRFFSSVAEAQMAFDAREIHLQARIQVRLRESTPPAEWAPPADWLPGDPFTLETTFGRCLLNEALPEGYPFINAQLNKKAQAAIVNDLAERYPKIQVAATLDALKSAGFYWATRSGVTVAIEDVVAPPNKAQILDEYEQRAERVEKQFGRGFLSDEERRSELVQIWTEATNKIAEAMEANFPETNPVYTLVNSGAAGNMMQIRQLAGMRGLVSNPKGEIIPRPIKANFREGLTVVEYFISTHGARKGLADTALRTADSGYLTRRLVDVSQDVIVREEDCGTERGILTRIARKGPDGVLVRDRYAETSAYARSLASDAVDAQGEVVVPAGADAGDVVIGQIIEAGIESVRVRSALTCESRMGVCAHCYGRSLATGKLVDVGEAVGIVAAQSIGEPGTQLTMRTFHSGGVAGDDITQGLPRVVELFEARSPKGKAPISEVTGRVKIEETEKTFKVVIVPDDGSEEIAYPVSRRSRLRVREGERVEVGAQLIDGAVDPHEVLRILGPRQVQLHLVDQVQEVYRSQGVSIHDKHIEIIIRQMLKRVNVLESGETTLLPGELVERARFEGENRRVVEIGGQPASARPVLMGITKASLATESWLSAASFQETTRVLTDAAINARSDSLVGLKENVIIGKLIPAGTGISRYRNIRVEPTDEARAAMYSVSGYEDGASVEYGAFGAGSGQAVPLDEFDYRSSGDYR</sequence>
<organism>
    <name type="scientific">Parafrankia sp. (strain EAN1pec)</name>
    <dbReference type="NCBI Taxonomy" id="298653"/>
    <lineage>
        <taxon>Bacteria</taxon>
        <taxon>Bacillati</taxon>
        <taxon>Actinomycetota</taxon>
        <taxon>Actinomycetes</taxon>
        <taxon>Frankiales</taxon>
        <taxon>Frankiaceae</taxon>
        <taxon>Parafrankia</taxon>
    </lineage>
</organism>
<gene>
    <name evidence="1" type="primary">rpoC</name>
    <name type="ordered locus">Franean1_6056</name>
</gene>
<dbReference type="EC" id="2.7.7.6" evidence="1"/>
<dbReference type="EMBL" id="CP000820">
    <property type="protein sequence ID" value="ABW15400.1"/>
    <property type="molecule type" value="Genomic_DNA"/>
</dbReference>
<dbReference type="RefSeq" id="WP_020463483.1">
    <property type="nucleotide sequence ID" value="NC_009921.1"/>
</dbReference>
<dbReference type="SMR" id="A8LC63"/>
<dbReference type="STRING" id="298653.Franean1_6056"/>
<dbReference type="KEGG" id="fre:Franean1_6056"/>
<dbReference type="eggNOG" id="COG0086">
    <property type="taxonomic scope" value="Bacteria"/>
</dbReference>
<dbReference type="HOGENOM" id="CLU_000524_3_1_11"/>
<dbReference type="GO" id="GO:0000428">
    <property type="term" value="C:DNA-directed RNA polymerase complex"/>
    <property type="evidence" value="ECO:0007669"/>
    <property type="project" value="UniProtKB-KW"/>
</dbReference>
<dbReference type="GO" id="GO:0003677">
    <property type="term" value="F:DNA binding"/>
    <property type="evidence" value="ECO:0007669"/>
    <property type="project" value="UniProtKB-UniRule"/>
</dbReference>
<dbReference type="GO" id="GO:0003899">
    <property type="term" value="F:DNA-directed RNA polymerase activity"/>
    <property type="evidence" value="ECO:0007669"/>
    <property type="project" value="UniProtKB-UniRule"/>
</dbReference>
<dbReference type="GO" id="GO:0000287">
    <property type="term" value="F:magnesium ion binding"/>
    <property type="evidence" value="ECO:0007669"/>
    <property type="project" value="UniProtKB-UniRule"/>
</dbReference>
<dbReference type="GO" id="GO:0008270">
    <property type="term" value="F:zinc ion binding"/>
    <property type="evidence" value="ECO:0007669"/>
    <property type="project" value="UniProtKB-UniRule"/>
</dbReference>
<dbReference type="GO" id="GO:0006351">
    <property type="term" value="P:DNA-templated transcription"/>
    <property type="evidence" value="ECO:0007669"/>
    <property type="project" value="UniProtKB-UniRule"/>
</dbReference>
<dbReference type="CDD" id="cd02655">
    <property type="entry name" value="RNAP_beta'_C"/>
    <property type="match status" value="1"/>
</dbReference>
<dbReference type="CDD" id="cd01609">
    <property type="entry name" value="RNAP_beta'_N"/>
    <property type="match status" value="1"/>
</dbReference>
<dbReference type="FunFam" id="1.10.150.390:FF:000002">
    <property type="entry name" value="DNA-directed RNA polymerase subunit beta"/>
    <property type="match status" value="1"/>
</dbReference>
<dbReference type="FunFam" id="1.10.40.90:FF:000001">
    <property type="entry name" value="DNA-directed RNA polymerase subunit beta"/>
    <property type="match status" value="1"/>
</dbReference>
<dbReference type="FunFam" id="4.10.860.120:FF:000001">
    <property type="entry name" value="DNA-directed RNA polymerase subunit beta"/>
    <property type="match status" value="1"/>
</dbReference>
<dbReference type="Gene3D" id="1.10.132.30">
    <property type="match status" value="1"/>
</dbReference>
<dbReference type="Gene3D" id="1.10.150.390">
    <property type="match status" value="1"/>
</dbReference>
<dbReference type="Gene3D" id="1.10.1790.20">
    <property type="match status" value="1"/>
</dbReference>
<dbReference type="Gene3D" id="1.10.40.90">
    <property type="match status" value="1"/>
</dbReference>
<dbReference type="Gene3D" id="2.40.40.20">
    <property type="match status" value="1"/>
</dbReference>
<dbReference type="Gene3D" id="2.40.50.100">
    <property type="match status" value="1"/>
</dbReference>
<dbReference type="Gene3D" id="4.10.860.120">
    <property type="entry name" value="RNA polymerase II, clamp domain"/>
    <property type="match status" value="1"/>
</dbReference>
<dbReference type="Gene3D" id="1.10.274.100">
    <property type="entry name" value="RNA polymerase Rpb1, domain 3"/>
    <property type="match status" value="2"/>
</dbReference>
<dbReference type="HAMAP" id="MF_01322">
    <property type="entry name" value="RNApol_bact_RpoC"/>
    <property type="match status" value="1"/>
</dbReference>
<dbReference type="InterPro" id="IPR045867">
    <property type="entry name" value="DNA-dir_RpoC_beta_prime"/>
</dbReference>
<dbReference type="InterPro" id="IPR012754">
    <property type="entry name" value="DNA-dir_RpoC_beta_prime_bact"/>
</dbReference>
<dbReference type="InterPro" id="IPR000722">
    <property type="entry name" value="RNA_pol_asu"/>
</dbReference>
<dbReference type="InterPro" id="IPR006592">
    <property type="entry name" value="RNA_pol_N"/>
</dbReference>
<dbReference type="InterPro" id="IPR007080">
    <property type="entry name" value="RNA_pol_Rpb1_1"/>
</dbReference>
<dbReference type="InterPro" id="IPR007066">
    <property type="entry name" value="RNA_pol_Rpb1_3"/>
</dbReference>
<dbReference type="InterPro" id="IPR042102">
    <property type="entry name" value="RNA_pol_Rpb1_3_sf"/>
</dbReference>
<dbReference type="InterPro" id="IPR007083">
    <property type="entry name" value="RNA_pol_Rpb1_4"/>
</dbReference>
<dbReference type="InterPro" id="IPR007081">
    <property type="entry name" value="RNA_pol_Rpb1_5"/>
</dbReference>
<dbReference type="InterPro" id="IPR044893">
    <property type="entry name" value="RNA_pol_Rpb1_clamp_domain"/>
</dbReference>
<dbReference type="InterPro" id="IPR038120">
    <property type="entry name" value="Rpb1_funnel_sf"/>
</dbReference>
<dbReference type="NCBIfam" id="NF011498">
    <property type="entry name" value="PRK14906.1"/>
    <property type="match status" value="1"/>
</dbReference>
<dbReference type="NCBIfam" id="TIGR02386">
    <property type="entry name" value="rpoC_TIGR"/>
    <property type="match status" value="1"/>
</dbReference>
<dbReference type="PANTHER" id="PTHR19376">
    <property type="entry name" value="DNA-DIRECTED RNA POLYMERASE"/>
    <property type="match status" value="1"/>
</dbReference>
<dbReference type="PANTHER" id="PTHR19376:SF54">
    <property type="entry name" value="DNA-DIRECTED RNA POLYMERASE SUBUNIT BETA"/>
    <property type="match status" value="1"/>
</dbReference>
<dbReference type="Pfam" id="PF04997">
    <property type="entry name" value="RNA_pol_Rpb1_1"/>
    <property type="match status" value="1"/>
</dbReference>
<dbReference type="Pfam" id="PF00623">
    <property type="entry name" value="RNA_pol_Rpb1_2"/>
    <property type="match status" value="2"/>
</dbReference>
<dbReference type="Pfam" id="PF04983">
    <property type="entry name" value="RNA_pol_Rpb1_3"/>
    <property type="match status" value="1"/>
</dbReference>
<dbReference type="Pfam" id="PF05000">
    <property type="entry name" value="RNA_pol_Rpb1_4"/>
    <property type="match status" value="1"/>
</dbReference>
<dbReference type="Pfam" id="PF04998">
    <property type="entry name" value="RNA_pol_Rpb1_5"/>
    <property type="match status" value="1"/>
</dbReference>
<dbReference type="SMART" id="SM00663">
    <property type="entry name" value="RPOLA_N"/>
    <property type="match status" value="1"/>
</dbReference>
<dbReference type="SUPFAM" id="SSF64484">
    <property type="entry name" value="beta and beta-prime subunits of DNA dependent RNA-polymerase"/>
    <property type="match status" value="1"/>
</dbReference>
<proteinExistence type="inferred from homology"/>
<accession>A8LC63</accession>
<name>RPOC_PARS2</name>
<protein>
    <recommendedName>
        <fullName evidence="1">DNA-directed RNA polymerase subunit beta'</fullName>
        <shortName evidence="1">RNAP subunit beta'</shortName>
        <ecNumber evidence="1">2.7.7.6</ecNumber>
    </recommendedName>
    <alternativeName>
        <fullName evidence="1">RNA polymerase subunit beta'</fullName>
    </alternativeName>
    <alternativeName>
        <fullName evidence="1">Transcriptase subunit beta'</fullName>
    </alternativeName>
</protein>
<evidence type="ECO:0000255" key="1">
    <source>
        <dbReference type="HAMAP-Rule" id="MF_01322"/>
    </source>
</evidence>
<evidence type="ECO:0000256" key="2">
    <source>
        <dbReference type="SAM" id="MobiDB-lite"/>
    </source>
</evidence>
<keyword id="KW-0240">DNA-directed RNA polymerase</keyword>
<keyword id="KW-0460">Magnesium</keyword>
<keyword id="KW-0479">Metal-binding</keyword>
<keyword id="KW-0548">Nucleotidyltransferase</keyword>
<keyword id="KW-0804">Transcription</keyword>
<keyword id="KW-0808">Transferase</keyword>
<keyword id="KW-0862">Zinc</keyword>